<evidence type="ECO:0000255" key="1">
    <source>
        <dbReference type="HAMAP-Rule" id="MF_01675"/>
    </source>
</evidence>
<accession>A6UPN9</accession>
<comment type="function">
    <text evidence="1">Converts O-phospho-L-seryl-tRNA(Cys) (Sep-tRNA(Cys)) to L-cysteinyl-tRNA(Cys) (Cys-tRNA(Cys)).</text>
</comment>
<comment type="catalytic activity">
    <reaction evidence="1">
        <text>O-phospho-L-seryl-tRNA(Cys) + hydrogen sulfide + H(+) = L-cysteinyl-tRNA(Cys) + phosphate</text>
        <dbReference type="Rhea" id="RHEA:25686"/>
        <dbReference type="Rhea" id="RHEA-COMP:9679"/>
        <dbReference type="Rhea" id="RHEA-COMP:9719"/>
        <dbReference type="ChEBI" id="CHEBI:15378"/>
        <dbReference type="ChEBI" id="CHEBI:29919"/>
        <dbReference type="ChEBI" id="CHEBI:43474"/>
        <dbReference type="ChEBI" id="CHEBI:78517"/>
        <dbReference type="ChEBI" id="CHEBI:78551"/>
        <dbReference type="EC" id="2.5.1.73"/>
    </reaction>
</comment>
<comment type="cofactor">
    <cofactor evidence="1">
        <name>pyridoxal 5'-phosphate</name>
        <dbReference type="ChEBI" id="CHEBI:597326"/>
    </cofactor>
</comment>
<comment type="subunit">
    <text evidence="1">Homodimer. Interacts with SepRS.</text>
</comment>
<comment type="similarity">
    <text evidence="1">Belongs to the SepCysS family.</text>
</comment>
<name>SPSS_METVS</name>
<keyword id="KW-0648">Protein biosynthesis</keyword>
<keyword id="KW-0663">Pyridoxal phosphate</keyword>
<keyword id="KW-0808">Transferase</keyword>
<protein>
    <recommendedName>
        <fullName evidence="1">O-phospho-L-seryl-tRNA:Cys-tRNA synthase</fullName>
        <ecNumber evidence="1">2.5.1.73</ecNumber>
    </recommendedName>
    <alternativeName>
        <fullName evidence="1">Sep-tRNA:Cys-tRNA synthase</fullName>
        <shortName evidence="1">SepCysS</shortName>
    </alternativeName>
</protein>
<sequence length="381" mass="43015">MDINIDKYKNITRNLERDIVNLNPIQRGGILPTEAKKVIYEYWDGYSVCDYCSGRLDKIETPPINEFLDDMSKFLGMDITRPTHGARESKYAVMNAICKKGDYVVLDGNSHYTSYVALERANLNYVKTDVEEYPNFRVIPKSYAEKIDELEDSGKNIGLILLTHVDGSYGNVSDVSKVGKIAKSKGYPLLLNCAYSVGRMPVDGKKLNVDFIAASGHKSMAASGPCGLLSINAEYEDEILKTSKVNVVKELQMLGCTSRGIPILSLMASFPHIIERVKNWNLELEKTRKVVFEFEKLGFIALGEKPRNHDIIRFETPVLDKIAEKDKRRGFFFYEELKKRGIGGIRRGVTKEFKMSVYGLTGMQVDYIIDCIKSIVLENAN</sequence>
<reference key="1">
    <citation type="submission" date="2007-06" db="EMBL/GenBank/DDBJ databases">
        <title>Complete sequence of Methanococcus vannielii SB.</title>
        <authorList>
            <consortium name="US DOE Joint Genome Institute"/>
            <person name="Copeland A."/>
            <person name="Lucas S."/>
            <person name="Lapidus A."/>
            <person name="Barry K."/>
            <person name="Glavina del Rio T."/>
            <person name="Dalin E."/>
            <person name="Tice H."/>
            <person name="Pitluck S."/>
            <person name="Chain P."/>
            <person name="Malfatti S."/>
            <person name="Shin M."/>
            <person name="Vergez L."/>
            <person name="Schmutz J."/>
            <person name="Larimer F."/>
            <person name="Land M."/>
            <person name="Hauser L."/>
            <person name="Kyrpides N."/>
            <person name="Anderson I."/>
            <person name="Sieprawska-Lupa M."/>
            <person name="Whitman W.B."/>
            <person name="Richardson P."/>
        </authorList>
    </citation>
    <scope>NUCLEOTIDE SEQUENCE [LARGE SCALE GENOMIC DNA]</scope>
    <source>
        <strain>ATCC 35089 / DSM 1224 / JCM 13029 / OCM 148 / SB</strain>
    </source>
</reference>
<proteinExistence type="inferred from homology"/>
<feature type="chain" id="PRO_0000359452" description="O-phospho-L-seryl-tRNA:Cys-tRNA synthase">
    <location>
        <begin position="1"/>
        <end position="381"/>
    </location>
</feature>
<feature type="binding site" evidence="1">
    <location>
        <begin position="86"/>
        <end position="87"/>
    </location>
    <ligand>
        <name>pyridoxal 5'-phosphate</name>
        <dbReference type="ChEBI" id="CHEBI:597326"/>
    </ligand>
</feature>
<feature type="binding site" evidence="1">
    <location>
        <position position="192"/>
    </location>
    <ligand>
        <name>pyridoxal 5'-phosphate</name>
        <dbReference type="ChEBI" id="CHEBI:597326"/>
    </ligand>
</feature>
<feature type="binding site" evidence="1">
    <location>
        <begin position="215"/>
        <end position="217"/>
    </location>
    <ligand>
        <name>pyridoxal 5'-phosphate</name>
        <dbReference type="ChEBI" id="CHEBI:597326"/>
    </ligand>
</feature>
<feature type="modified residue" description="N6-(pyridoxal phosphate)lysine" evidence="1">
    <location>
        <position position="218"/>
    </location>
</feature>
<dbReference type="EC" id="2.5.1.73" evidence="1"/>
<dbReference type="EMBL" id="CP000742">
    <property type="protein sequence ID" value="ABR54461.1"/>
    <property type="molecule type" value="Genomic_DNA"/>
</dbReference>
<dbReference type="RefSeq" id="WP_011972364.1">
    <property type="nucleotide sequence ID" value="NC_009634.1"/>
</dbReference>
<dbReference type="SMR" id="A6UPN9"/>
<dbReference type="STRING" id="406327.Mevan_0554"/>
<dbReference type="GeneID" id="5325981"/>
<dbReference type="KEGG" id="mvn:Mevan_0554"/>
<dbReference type="eggNOG" id="arCOG00091">
    <property type="taxonomic scope" value="Archaea"/>
</dbReference>
<dbReference type="HOGENOM" id="CLU_060476_0_0_2"/>
<dbReference type="OrthoDB" id="5817at2157"/>
<dbReference type="Proteomes" id="UP000001107">
    <property type="component" value="Chromosome"/>
</dbReference>
<dbReference type="GO" id="GO:0043766">
    <property type="term" value="F:Sep-tRNA:Cys-tRNA synthase activity"/>
    <property type="evidence" value="ECO:0007669"/>
    <property type="project" value="UniProtKB-UniRule"/>
</dbReference>
<dbReference type="GO" id="GO:0006412">
    <property type="term" value="P:translation"/>
    <property type="evidence" value="ECO:0007669"/>
    <property type="project" value="UniProtKB-KW"/>
</dbReference>
<dbReference type="Gene3D" id="3.90.1150.10">
    <property type="entry name" value="Aspartate Aminotransferase, domain 1"/>
    <property type="match status" value="1"/>
</dbReference>
<dbReference type="Gene3D" id="3.40.640.10">
    <property type="entry name" value="Type I PLP-dependent aspartate aminotransferase-like (Major domain)"/>
    <property type="match status" value="1"/>
</dbReference>
<dbReference type="HAMAP" id="MF_01675">
    <property type="entry name" value="Sep_Cys_tRNA_synth"/>
    <property type="match status" value="1"/>
</dbReference>
<dbReference type="InterPro" id="IPR015424">
    <property type="entry name" value="PyrdxlP-dep_Trfase"/>
</dbReference>
<dbReference type="InterPro" id="IPR015421">
    <property type="entry name" value="PyrdxlP-dep_Trfase_major"/>
</dbReference>
<dbReference type="InterPro" id="IPR015422">
    <property type="entry name" value="PyrdxlP-dep_Trfase_small"/>
</dbReference>
<dbReference type="InterPro" id="IPR013375">
    <property type="entry name" value="Sep_Cys-tRNA_synth_arc"/>
</dbReference>
<dbReference type="InterPro" id="IPR008829">
    <property type="entry name" value="SepSecS/SepCysS"/>
</dbReference>
<dbReference type="NCBIfam" id="NF006810">
    <property type="entry name" value="PRK09331.1"/>
    <property type="match status" value="1"/>
</dbReference>
<dbReference type="NCBIfam" id="TIGR02539">
    <property type="entry name" value="SepCysS"/>
    <property type="match status" value="1"/>
</dbReference>
<dbReference type="Pfam" id="PF05889">
    <property type="entry name" value="SepSecS"/>
    <property type="match status" value="1"/>
</dbReference>
<dbReference type="SUPFAM" id="SSF53383">
    <property type="entry name" value="PLP-dependent transferases"/>
    <property type="match status" value="1"/>
</dbReference>
<organism>
    <name type="scientific">Methanococcus vannielii (strain ATCC 35089 / DSM 1224 / JCM 13029 / OCM 148 / SB)</name>
    <dbReference type="NCBI Taxonomy" id="406327"/>
    <lineage>
        <taxon>Archaea</taxon>
        <taxon>Methanobacteriati</taxon>
        <taxon>Methanobacteriota</taxon>
        <taxon>Methanomada group</taxon>
        <taxon>Methanococci</taxon>
        <taxon>Methanococcales</taxon>
        <taxon>Methanococcaceae</taxon>
        <taxon>Methanococcus</taxon>
    </lineage>
</organism>
<gene>
    <name type="ordered locus">Mevan_0554</name>
</gene>